<feature type="chain" id="PRO_0000154242" description="Indole-3-glycerol phosphate synthase 1">
    <location>
        <begin position="1"/>
        <end position="267"/>
    </location>
</feature>
<gene>
    <name type="primary">trpC1</name>
    <name type="ordered locus">RSc2885</name>
    <name type="ORF">RS00217</name>
</gene>
<organism>
    <name type="scientific">Ralstonia nicotianae (strain ATCC BAA-1114 / GMI1000)</name>
    <name type="common">Ralstonia solanacearum</name>
    <dbReference type="NCBI Taxonomy" id="267608"/>
    <lineage>
        <taxon>Bacteria</taxon>
        <taxon>Pseudomonadati</taxon>
        <taxon>Pseudomonadota</taxon>
        <taxon>Betaproteobacteria</taxon>
        <taxon>Burkholderiales</taxon>
        <taxon>Burkholderiaceae</taxon>
        <taxon>Ralstonia</taxon>
        <taxon>Ralstonia solanacearum species complex</taxon>
    </lineage>
</organism>
<comment type="catalytic activity">
    <reaction>
        <text>1-(2-carboxyphenylamino)-1-deoxy-D-ribulose 5-phosphate + H(+) = (1S,2R)-1-C-(indol-3-yl)glycerol 3-phosphate + CO2 + H2O</text>
        <dbReference type="Rhea" id="RHEA:23476"/>
        <dbReference type="ChEBI" id="CHEBI:15377"/>
        <dbReference type="ChEBI" id="CHEBI:15378"/>
        <dbReference type="ChEBI" id="CHEBI:16526"/>
        <dbReference type="ChEBI" id="CHEBI:58613"/>
        <dbReference type="ChEBI" id="CHEBI:58866"/>
        <dbReference type="EC" id="4.1.1.48"/>
    </reaction>
</comment>
<comment type="pathway">
    <text>Amino-acid biosynthesis; L-tryptophan biosynthesis; L-tryptophan from chorismate: step 4/5.</text>
</comment>
<comment type="similarity">
    <text evidence="1">Belongs to the TrpC family.</text>
</comment>
<protein>
    <recommendedName>
        <fullName>Indole-3-glycerol phosphate synthase 1</fullName>
        <shortName>IGPS 1</shortName>
        <ecNumber>4.1.1.48</ecNumber>
    </recommendedName>
</protein>
<proteinExistence type="inferred from homology"/>
<reference key="1">
    <citation type="journal article" date="2002" name="Nature">
        <title>Genome sequence of the plant pathogen Ralstonia solanacearum.</title>
        <authorList>
            <person name="Salanoubat M."/>
            <person name="Genin S."/>
            <person name="Artiguenave F."/>
            <person name="Gouzy J."/>
            <person name="Mangenot S."/>
            <person name="Arlat M."/>
            <person name="Billault A."/>
            <person name="Brottier P."/>
            <person name="Camus J.-C."/>
            <person name="Cattolico L."/>
            <person name="Chandler M."/>
            <person name="Choisne N."/>
            <person name="Claudel-Renard C."/>
            <person name="Cunnac S."/>
            <person name="Demange N."/>
            <person name="Gaspin C."/>
            <person name="Lavie M."/>
            <person name="Moisan A."/>
            <person name="Robert C."/>
            <person name="Saurin W."/>
            <person name="Schiex T."/>
            <person name="Siguier P."/>
            <person name="Thebault P."/>
            <person name="Whalen M."/>
            <person name="Wincker P."/>
            <person name="Levy M."/>
            <person name="Weissenbach J."/>
            <person name="Boucher C.A."/>
        </authorList>
    </citation>
    <scope>NUCLEOTIDE SEQUENCE [LARGE SCALE GENOMIC DNA]</scope>
    <source>
        <strain>ATCC BAA-1114 / GMI1000</strain>
    </source>
</reference>
<keyword id="KW-0028">Amino-acid biosynthesis</keyword>
<keyword id="KW-0057">Aromatic amino acid biosynthesis</keyword>
<keyword id="KW-0210">Decarboxylase</keyword>
<keyword id="KW-0456">Lyase</keyword>
<keyword id="KW-1185">Reference proteome</keyword>
<keyword id="KW-0822">Tryptophan biosynthesis</keyword>
<sequence>MSDILQKILAVKAEEVAAARKHRDLPSVRAEAEANRHDSTLGPRGFAQALRDKIGAGRAAVIAEVKKASPSKGVLRPDFKPAEIAGSYAEHGAACLSVLTDEQFFQGHADYLREARAACALPALRKDFMVDLYQVYEARSWGADCILLIVSALDQGLMAELEACAHELGMDVLVEVHDGHELERALRLSTPLVGVNNRNLRTFETTLDTTLGLLKHMPDDRIVVTESGILKPDDVRKMRAADVNAFLVGEAFMRADDPGTELARLFA</sequence>
<evidence type="ECO:0000305" key="1"/>
<accession>Q8XVE6</accession>
<dbReference type="EC" id="4.1.1.48"/>
<dbReference type="EMBL" id="AL646052">
    <property type="protein sequence ID" value="CAD16592.1"/>
    <property type="molecule type" value="Genomic_DNA"/>
</dbReference>
<dbReference type="SMR" id="Q8XVE6"/>
<dbReference type="STRING" id="267608.RSc2885"/>
<dbReference type="EnsemblBacteria" id="CAD16592">
    <property type="protein sequence ID" value="CAD16592"/>
    <property type="gene ID" value="RSc2885"/>
</dbReference>
<dbReference type="KEGG" id="rso:RSc2885"/>
<dbReference type="eggNOG" id="COG0134">
    <property type="taxonomic scope" value="Bacteria"/>
</dbReference>
<dbReference type="HOGENOM" id="CLU_034247_2_0_4"/>
<dbReference type="UniPathway" id="UPA00035">
    <property type="reaction ID" value="UER00043"/>
</dbReference>
<dbReference type="Proteomes" id="UP000001436">
    <property type="component" value="Chromosome"/>
</dbReference>
<dbReference type="GO" id="GO:0004425">
    <property type="term" value="F:indole-3-glycerol-phosphate synthase activity"/>
    <property type="evidence" value="ECO:0007669"/>
    <property type="project" value="UniProtKB-UniRule"/>
</dbReference>
<dbReference type="GO" id="GO:0004640">
    <property type="term" value="F:phosphoribosylanthranilate isomerase activity"/>
    <property type="evidence" value="ECO:0007669"/>
    <property type="project" value="TreeGrafter"/>
</dbReference>
<dbReference type="GO" id="GO:0000162">
    <property type="term" value="P:L-tryptophan biosynthetic process"/>
    <property type="evidence" value="ECO:0007669"/>
    <property type="project" value="UniProtKB-UniRule"/>
</dbReference>
<dbReference type="CDD" id="cd00331">
    <property type="entry name" value="IGPS"/>
    <property type="match status" value="1"/>
</dbReference>
<dbReference type="FunFam" id="3.20.20.70:FF:000024">
    <property type="entry name" value="Indole-3-glycerol phosphate synthase"/>
    <property type="match status" value="1"/>
</dbReference>
<dbReference type="Gene3D" id="3.20.20.70">
    <property type="entry name" value="Aldolase class I"/>
    <property type="match status" value="1"/>
</dbReference>
<dbReference type="HAMAP" id="MF_00134_B">
    <property type="entry name" value="IGPS_B"/>
    <property type="match status" value="1"/>
</dbReference>
<dbReference type="InterPro" id="IPR013785">
    <property type="entry name" value="Aldolase_TIM"/>
</dbReference>
<dbReference type="InterPro" id="IPR045186">
    <property type="entry name" value="Indole-3-glycerol_P_synth"/>
</dbReference>
<dbReference type="InterPro" id="IPR013798">
    <property type="entry name" value="Indole-3-glycerol_P_synth_dom"/>
</dbReference>
<dbReference type="InterPro" id="IPR001468">
    <property type="entry name" value="Indole-3-GlycerolPSynthase_CS"/>
</dbReference>
<dbReference type="InterPro" id="IPR011060">
    <property type="entry name" value="RibuloseP-bd_barrel"/>
</dbReference>
<dbReference type="NCBIfam" id="NF001370">
    <property type="entry name" value="PRK00278.1-2"/>
    <property type="match status" value="1"/>
</dbReference>
<dbReference type="NCBIfam" id="NF001373">
    <property type="entry name" value="PRK00278.1-6"/>
    <property type="match status" value="1"/>
</dbReference>
<dbReference type="NCBIfam" id="NF001377">
    <property type="entry name" value="PRK00278.2-4"/>
    <property type="match status" value="1"/>
</dbReference>
<dbReference type="PANTHER" id="PTHR22854:SF2">
    <property type="entry name" value="INDOLE-3-GLYCEROL-PHOSPHATE SYNTHASE"/>
    <property type="match status" value="1"/>
</dbReference>
<dbReference type="PANTHER" id="PTHR22854">
    <property type="entry name" value="TRYPTOPHAN BIOSYNTHESIS PROTEIN"/>
    <property type="match status" value="1"/>
</dbReference>
<dbReference type="Pfam" id="PF00218">
    <property type="entry name" value="IGPS"/>
    <property type="match status" value="1"/>
</dbReference>
<dbReference type="SUPFAM" id="SSF51366">
    <property type="entry name" value="Ribulose-phoshate binding barrel"/>
    <property type="match status" value="1"/>
</dbReference>
<dbReference type="PROSITE" id="PS00614">
    <property type="entry name" value="IGPS"/>
    <property type="match status" value="1"/>
</dbReference>
<name>TRPC1_RALN1</name>